<organism>
    <name type="scientific">Pseudomonas aeruginosa (strain ATCC 15692 / DSM 22644 / CIP 104116 / JCM 14847 / LMG 12228 / 1C / PRS 101 / PAO1)</name>
    <dbReference type="NCBI Taxonomy" id="208964"/>
    <lineage>
        <taxon>Bacteria</taxon>
        <taxon>Pseudomonadati</taxon>
        <taxon>Pseudomonadota</taxon>
        <taxon>Gammaproteobacteria</taxon>
        <taxon>Pseudomonadales</taxon>
        <taxon>Pseudomonadaceae</taxon>
        <taxon>Pseudomonas</taxon>
    </lineage>
</organism>
<accession>Q9HXL8</accession>
<evidence type="ECO:0000255" key="1">
    <source>
        <dbReference type="HAMAP-Rule" id="MF_00378"/>
    </source>
</evidence>
<sequence length="459" mass="51232">MRNDPFQRLGLDREVLTVSQLNQRARLLLEDVFPQVWVEGELSNLARPASGHVYFTLKDSNAQIRCALFRQNALRVRQALRDGLAVKVRGKISLFEGRGDYQLIADTVEPAGDGALRLAFEALKEKLAGEGLFASERKRPLPAHPRRIGIVSSPSGAVIRDIISVFRRRAPQVELTLVPTAVQGREAVAQIVRALQLADRQGFDALILARGGGSLEDLWCFNEEAVARAVAACATPIVSAVGHETDVSISDFVADVRAPTPSAAAELLAPNAGDLQQRLDGLRRRLVLRMRDQLLRERLRLEGVARRLRHPGERLRQQAQRLDDLDMRLRRAFERQLAVRHERLVRLETRLAAQHPGRTLALLRQKLDSLAARLPRAAREVLKDRRQRLEGLAQTLNVVSPLATLGRGYSILLDERGRAIRDAGQTQPGQRLKARLAEGELEVRVEDNHRTPVTLSLLD</sequence>
<name>EX7L_PSEAE</name>
<proteinExistence type="inferred from homology"/>
<feature type="chain" id="PRO_0000197866" description="Exodeoxyribonuclease 7 large subunit">
    <location>
        <begin position="1"/>
        <end position="459"/>
    </location>
</feature>
<keyword id="KW-0963">Cytoplasm</keyword>
<keyword id="KW-0269">Exonuclease</keyword>
<keyword id="KW-0378">Hydrolase</keyword>
<keyword id="KW-0540">Nuclease</keyword>
<keyword id="KW-1185">Reference proteome</keyword>
<reference key="1">
    <citation type="journal article" date="2000" name="Nature">
        <title>Complete genome sequence of Pseudomonas aeruginosa PAO1, an opportunistic pathogen.</title>
        <authorList>
            <person name="Stover C.K."/>
            <person name="Pham X.-Q.T."/>
            <person name="Erwin A.L."/>
            <person name="Mizoguchi S.D."/>
            <person name="Warrener P."/>
            <person name="Hickey M.J."/>
            <person name="Brinkman F.S.L."/>
            <person name="Hufnagle W.O."/>
            <person name="Kowalik D.J."/>
            <person name="Lagrou M."/>
            <person name="Garber R.L."/>
            <person name="Goltry L."/>
            <person name="Tolentino E."/>
            <person name="Westbrock-Wadman S."/>
            <person name="Yuan Y."/>
            <person name="Brody L.L."/>
            <person name="Coulter S.N."/>
            <person name="Folger K.R."/>
            <person name="Kas A."/>
            <person name="Larbig K."/>
            <person name="Lim R.M."/>
            <person name="Smith K.A."/>
            <person name="Spencer D.H."/>
            <person name="Wong G.K.-S."/>
            <person name="Wu Z."/>
            <person name="Paulsen I.T."/>
            <person name="Reizer J."/>
            <person name="Saier M.H. Jr."/>
            <person name="Hancock R.E.W."/>
            <person name="Lory S."/>
            <person name="Olson M.V."/>
        </authorList>
    </citation>
    <scope>NUCLEOTIDE SEQUENCE [LARGE SCALE GENOMIC DNA]</scope>
    <source>
        <strain>ATCC 15692 / DSM 22644 / CIP 104116 / JCM 14847 / LMG 12228 / 1C / PRS 101 / PAO1</strain>
    </source>
</reference>
<comment type="function">
    <text evidence="1">Bidirectionally degrades single-stranded DNA into large acid-insoluble oligonucleotides, which are then degraded further into small acid-soluble oligonucleotides.</text>
</comment>
<comment type="catalytic activity">
    <reaction evidence="1">
        <text>Exonucleolytic cleavage in either 5'- to 3'- or 3'- to 5'-direction to yield nucleoside 5'-phosphates.</text>
        <dbReference type="EC" id="3.1.11.6"/>
    </reaction>
</comment>
<comment type="subunit">
    <text evidence="1">Heterooligomer composed of large and small subunits.</text>
</comment>
<comment type="subcellular location">
    <subcellularLocation>
        <location evidence="1">Cytoplasm</location>
    </subcellularLocation>
</comment>
<comment type="similarity">
    <text evidence="1">Belongs to the XseA family.</text>
</comment>
<dbReference type="EC" id="3.1.11.6" evidence="1"/>
<dbReference type="EMBL" id="AE004091">
    <property type="protein sequence ID" value="AAG07164.1"/>
    <property type="molecule type" value="Genomic_DNA"/>
</dbReference>
<dbReference type="PIR" id="G83174">
    <property type="entry name" value="G83174"/>
</dbReference>
<dbReference type="RefSeq" id="NP_252466.1">
    <property type="nucleotide sequence ID" value="NC_002516.2"/>
</dbReference>
<dbReference type="RefSeq" id="WP_003113813.1">
    <property type="nucleotide sequence ID" value="NZ_QZGE01000001.1"/>
</dbReference>
<dbReference type="SMR" id="Q9HXL8"/>
<dbReference type="FunCoup" id="Q9HXL8">
    <property type="interactions" value="344"/>
</dbReference>
<dbReference type="STRING" id="208964.PA3777"/>
<dbReference type="PaxDb" id="208964-PA3777"/>
<dbReference type="GeneID" id="878333"/>
<dbReference type="KEGG" id="pae:PA3777"/>
<dbReference type="PATRIC" id="fig|208964.12.peg.3954"/>
<dbReference type="PseudoCAP" id="PA3777"/>
<dbReference type="HOGENOM" id="CLU_023625_3_1_6"/>
<dbReference type="InParanoid" id="Q9HXL8"/>
<dbReference type="OrthoDB" id="9802795at2"/>
<dbReference type="PhylomeDB" id="Q9HXL8"/>
<dbReference type="BioCyc" id="PAER208964:G1FZ6-3848-MONOMER"/>
<dbReference type="Proteomes" id="UP000002438">
    <property type="component" value="Chromosome"/>
</dbReference>
<dbReference type="GO" id="GO:0005737">
    <property type="term" value="C:cytoplasm"/>
    <property type="evidence" value="ECO:0007669"/>
    <property type="project" value="UniProtKB-SubCell"/>
</dbReference>
<dbReference type="GO" id="GO:0009318">
    <property type="term" value="C:exodeoxyribonuclease VII complex"/>
    <property type="evidence" value="ECO:0007669"/>
    <property type="project" value="InterPro"/>
</dbReference>
<dbReference type="GO" id="GO:0008855">
    <property type="term" value="F:exodeoxyribonuclease VII activity"/>
    <property type="evidence" value="ECO:0007669"/>
    <property type="project" value="UniProtKB-UniRule"/>
</dbReference>
<dbReference type="GO" id="GO:0003676">
    <property type="term" value="F:nucleic acid binding"/>
    <property type="evidence" value="ECO:0007669"/>
    <property type="project" value="InterPro"/>
</dbReference>
<dbReference type="GO" id="GO:0006308">
    <property type="term" value="P:DNA catabolic process"/>
    <property type="evidence" value="ECO:0007669"/>
    <property type="project" value="UniProtKB-UniRule"/>
</dbReference>
<dbReference type="CDD" id="cd04489">
    <property type="entry name" value="ExoVII_LU_OBF"/>
    <property type="match status" value="1"/>
</dbReference>
<dbReference type="HAMAP" id="MF_00378">
    <property type="entry name" value="Exonuc_7_L"/>
    <property type="match status" value="1"/>
</dbReference>
<dbReference type="InterPro" id="IPR003753">
    <property type="entry name" value="Exonuc_VII_L"/>
</dbReference>
<dbReference type="InterPro" id="IPR020579">
    <property type="entry name" value="Exonuc_VII_lsu_C"/>
</dbReference>
<dbReference type="InterPro" id="IPR025824">
    <property type="entry name" value="OB-fold_nuc-bd_dom"/>
</dbReference>
<dbReference type="NCBIfam" id="TIGR00237">
    <property type="entry name" value="xseA"/>
    <property type="match status" value="1"/>
</dbReference>
<dbReference type="PANTHER" id="PTHR30008">
    <property type="entry name" value="EXODEOXYRIBONUCLEASE 7 LARGE SUBUNIT"/>
    <property type="match status" value="1"/>
</dbReference>
<dbReference type="PANTHER" id="PTHR30008:SF0">
    <property type="entry name" value="EXODEOXYRIBONUCLEASE 7 LARGE SUBUNIT"/>
    <property type="match status" value="1"/>
</dbReference>
<dbReference type="Pfam" id="PF02601">
    <property type="entry name" value="Exonuc_VII_L"/>
    <property type="match status" value="1"/>
</dbReference>
<dbReference type="Pfam" id="PF13742">
    <property type="entry name" value="tRNA_anti_2"/>
    <property type="match status" value="1"/>
</dbReference>
<gene>
    <name evidence="1" type="primary">xseA</name>
    <name type="ordered locus">PA3777</name>
</gene>
<protein>
    <recommendedName>
        <fullName evidence="1">Exodeoxyribonuclease 7 large subunit</fullName>
        <ecNumber evidence="1">3.1.11.6</ecNumber>
    </recommendedName>
    <alternativeName>
        <fullName evidence="1">Exodeoxyribonuclease VII large subunit</fullName>
        <shortName evidence="1">Exonuclease VII large subunit</shortName>
    </alternativeName>
</protein>